<name>SEC4_CANAL</name>
<evidence type="ECO:0000250" key="1"/>
<evidence type="ECO:0000305" key="2"/>
<evidence type="ECO:0007829" key="3">
    <source>
        <dbReference type="PDB" id="6O62"/>
    </source>
</evidence>
<proteinExistence type="evidence at protein level"/>
<feature type="chain" id="PRO_0000413056" description="Ras-related protein SEC4">
    <location>
        <begin position="1"/>
        <end position="210"/>
    </location>
</feature>
<feature type="short sequence motif" description="Effector region" evidence="2">
    <location>
        <begin position="43"/>
        <end position="51"/>
    </location>
</feature>
<feature type="binding site" evidence="1">
    <location>
        <begin position="21"/>
        <end position="28"/>
    </location>
    <ligand>
        <name>GTP</name>
        <dbReference type="ChEBI" id="CHEBI:37565"/>
    </ligand>
</feature>
<feature type="binding site" evidence="1">
    <location>
        <begin position="69"/>
        <end position="73"/>
    </location>
    <ligand>
        <name>GTP</name>
        <dbReference type="ChEBI" id="CHEBI:37565"/>
    </ligand>
</feature>
<feature type="binding site" evidence="1">
    <location>
        <begin position="127"/>
        <end position="130"/>
    </location>
    <ligand>
        <name>GTP</name>
        <dbReference type="ChEBI" id="CHEBI:37565"/>
    </ligand>
</feature>
<feature type="lipid moiety-binding region" description="S-geranylgeranyl cysteine" evidence="1">
    <location>
        <position position="209"/>
    </location>
</feature>
<feature type="lipid moiety-binding region" description="S-geranylgeranyl cysteine" evidence="1">
    <location>
        <position position="210"/>
    </location>
</feature>
<feature type="strand" evidence="3">
    <location>
        <begin position="12"/>
        <end position="20"/>
    </location>
</feature>
<feature type="helix" evidence="3">
    <location>
        <begin position="27"/>
        <end position="35"/>
    </location>
</feature>
<feature type="strand" evidence="3">
    <location>
        <begin position="50"/>
        <end position="58"/>
    </location>
</feature>
<feature type="strand" evidence="3">
    <location>
        <begin position="61"/>
        <end position="69"/>
    </location>
</feature>
<feature type="strand" evidence="3">
    <location>
        <begin position="71"/>
        <end position="73"/>
    </location>
</feature>
<feature type="helix" evidence="3">
    <location>
        <begin position="81"/>
        <end position="84"/>
    </location>
</feature>
<feature type="strand" evidence="3">
    <location>
        <begin position="88"/>
        <end position="95"/>
    </location>
</feature>
<feature type="helix" evidence="3">
    <location>
        <begin position="99"/>
        <end position="103"/>
    </location>
</feature>
<feature type="helix" evidence="3">
    <location>
        <begin position="105"/>
        <end position="115"/>
    </location>
</feature>
<feature type="strand" evidence="3">
    <location>
        <begin position="121"/>
        <end position="127"/>
    </location>
</feature>
<feature type="helix" evidence="3">
    <location>
        <begin position="139"/>
        <end position="149"/>
    </location>
</feature>
<feature type="strand" evidence="3">
    <location>
        <begin position="153"/>
        <end position="155"/>
    </location>
</feature>
<feature type="turn" evidence="3">
    <location>
        <begin position="158"/>
        <end position="161"/>
    </location>
</feature>
<feature type="helix" evidence="3">
    <location>
        <begin position="164"/>
        <end position="178"/>
    </location>
</feature>
<accession>P0CY31</accession>
<accession>A0A1D8PS21</accession>
<accession>O14462</accession>
<accession>Q5A994</accession>
<dbReference type="EMBL" id="CP017630">
    <property type="protein sequence ID" value="AOW30934.1"/>
    <property type="molecule type" value="Genomic_DNA"/>
</dbReference>
<dbReference type="RefSeq" id="XP_718237.1">
    <property type="nucleotide sequence ID" value="XM_713144.1"/>
</dbReference>
<dbReference type="PDB" id="6O62">
    <property type="method" value="X-ray"/>
    <property type="resolution" value="1.88 A"/>
    <property type="chains" value="A=1-184"/>
</dbReference>
<dbReference type="PDBsum" id="6O62"/>
<dbReference type="SMR" id="P0CY31"/>
<dbReference type="FunCoup" id="P0CY31">
    <property type="interactions" value="582"/>
</dbReference>
<dbReference type="STRING" id="237561.P0CY31"/>
<dbReference type="EnsemblFungi" id="CR_01750C_A-T">
    <property type="protein sequence ID" value="CR_01750C_A-T-p1"/>
    <property type="gene ID" value="CR_01750C_A"/>
</dbReference>
<dbReference type="GeneID" id="3640119"/>
<dbReference type="KEGG" id="cal:CAALFM_CR01750CA"/>
<dbReference type="CGD" id="CAL0000186445">
    <property type="gene designation" value="SEC4"/>
</dbReference>
<dbReference type="VEuPathDB" id="FungiDB:CR_01750C_A"/>
<dbReference type="eggNOG" id="KOG0078">
    <property type="taxonomic scope" value="Eukaryota"/>
</dbReference>
<dbReference type="HOGENOM" id="CLU_041217_23_1_1"/>
<dbReference type="InParanoid" id="P0CY31"/>
<dbReference type="OMA" id="SKMEQNE"/>
<dbReference type="OrthoDB" id="9989112at2759"/>
<dbReference type="PRO" id="PR:P0CY31"/>
<dbReference type="Proteomes" id="UP000000559">
    <property type="component" value="Chromosome R"/>
</dbReference>
<dbReference type="GO" id="GO:0005934">
    <property type="term" value="C:cellular bud tip"/>
    <property type="evidence" value="ECO:0000314"/>
    <property type="project" value="CGD"/>
</dbReference>
<dbReference type="GO" id="GO:0005768">
    <property type="term" value="C:endosome"/>
    <property type="evidence" value="ECO:0000318"/>
    <property type="project" value="GO_Central"/>
</dbReference>
<dbReference type="GO" id="GO:1903561">
    <property type="term" value="C:extracellular vesicle"/>
    <property type="evidence" value="ECO:0000314"/>
    <property type="project" value="CGD"/>
</dbReference>
<dbReference type="GO" id="GO:0000131">
    <property type="term" value="C:incipient cellular bud site"/>
    <property type="evidence" value="ECO:0000314"/>
    <property type="project" value="CGD"/>
</dbReference>
<dbReference type="GO" id="GO:0043332">
    <property type="term" value="C:mating projection tip"/>
    <property type="evidence" value="ECO:0007669"/>
    <property type="project" value="EnsemblFungi"/>
</dbReference>
<dbReference type="GO" id="GO:0005886">
    <property type="term" value="C:plasma membrane"/>
    <property type="evidence" value="ECO:0000314"/>
    <property type="project" value="CGD"/>
</dbReference>
<dbReference type="GO" id="GO:0031521">
    <property type="term" value="C:spitzenkorper"/>
    <property type="evidence" value="ECO:0000314"/>
    <property type="project" value="CGD"/>
</dbReference>
<dbReference type="GO" id="GO:0030658">
    <property type="term" value="C:transport vesicle membrane"/>
    <property type="evidence" value="ECO:0007669"/>
    <property type="project" value="UniProtKB-SubCell"/>
</dbReference>
<dbReference type="GO" id="GO:0005525">
    <property type="term" value="F:GTP binding"/>
    <property type="evidence" value="ECO:0007669"/>
    <property type="project" value="UniProtKB-KW"/>
</dbReference>
<dbReference type="GO" id="GO:0003924">
    <property type="term" value="F:GTPase activity"/>
    <property type="evidence" value="ECO:0000316"/>
    <property type="project" value="CGD"/>
</dbReference>
<dbReference type="GO" id="GO:0031321">
    <property type="term" value="P:ascospore-type prospore assembly"/>
    <property type="evidence" value="ECO:0007669"/>
    <property type="project" value="EnsemblFungi"/>
</dbReference>
<dbReference type="GO" id="GO:0006914">
    <property type="term" value="P:autophagy"/>
    <property type="evidence" value="ECO:0007669"/>
    <property type="project" value="EnsemblFungi"/>
</dbReference>
<dbReference type="GO" id="GO:0006887">
    <property type="term" value="P:exocytosis"/>
    <property type="evidence" value="ECO:0000315"/>
    <property type="project" value="CGD"/>
</dbReference>
<dbReference type="GO" id="GO:0006893">
    <property type="term" value="P:Golgi to plasma membrane transport"/>
    <property type="evidence" value="ECO:0000315"/>
    <property type="project" value="CGD"/>
</dbReference>
<dbReference type="GO" id="GO:0007107">
    <property type="term" value="P:membrane addition at site of cytokinesis"/>
    <property type="evidence" value="ECO:0007669"/>
    <property type="project" value="EnsemblFungi"/>
</dbReference>
<dbReference type="GO" id="GO:0009306">
    <property type="term" value="P:protein secretion"/>
    <property type="evidence" value="ECO:0000315"/>
    <property type="project" value="CGD"/>
</dbReference>
<dbReference type="GO" id="GO:0006906">
    <property type="term" value="P:vesicle fusion"/>
    <property type="evidence" value="ECO:0000316"/>
    <property type="project" value="CGD"/>
</dbReference>
<dbReference type="GO" id="GO:0006903">
    <property type="term" value="P:vesicle targeting"/>
    <property type="evidence" value="ECO:0000316"/>
    <property type="project" value="CGD"/>
</dbReference>
<dbReference type="CDD" id="cd01867">
    <property type="entry name" value="Rab8_Rab10_Rab13_like"/>
    <property type="match status" value="1"/>
</dbReference>
<dbReference type="FunFam" id="3.40.50.300:FF:000961">
    <property type="entry name" value="Ras-related protein Rab-8B"/>
    <property type="match status" value="1"/>
</dbReference>
<dbReference type="Gene3D" id="3.40.50.300">
    <property type="entry name" value="P-loop containing nucleotide triphosphate hydrolases"/>
    <property type="match status" value="1"/>
</dbReference>
<dbReference type="InterPro" id="IPR027417">
    <property type="entry name" value="P-loop_NTPase"/>
</dbReference>
<dbReference type="InterPro" id="IPR005225">
    <property type="entry name" value="Small_GTP-bd"/>
</dbReference>
<dbReference type="InterPro" id="IPR001806">
    <property type="entry name" value="Small_GTPase"/>
</dbReference>
<dbReference type="InterPro" id="IPR050305">
    <property type="entry name" value="Small_GTPase_Rab"/>
</dbReference>
<dbReference type="NCBIfam" id="TIGR00231">
    <property type="entry name" value="small_GTP"/>
    <property type="match status" value="1"/>
</dbReference>
<dbReference type="PANTHER" id="PTHR47980">
    <property type="entry name" value="LD44762P"/>
    <property type="match status" value="1"/>
</dbReference>
<dbReference type="Pfam" id="PF00071">
    <property type="entry name" value="Ras"/>
    <property type="match status" value="1"/>
</dbReference>
<dbReference type="PRINTS" id="PR00449">
    <property type="entry name" value="RASTRNSFRMNG"/>
</dbReference>
<dbReference type="SMART" id="SM00177">
    <property type="entry name" value="ARF"/>
    <property type="match status" value="1"/>
</dbReference>
<dbReference type="SMART" id="SM00175">
    <property type="entry name" value="RAB"/>
    <property type="match status" value="1"/>
</dbReference>
<dbReference type="SMART" id="SM00176">
    <property type="entry name" value="RAN"/>
    <property type="match status" value="1"/>
</dbReference>
<dbReference type="SMART" id="SM00173">
    <property type="entry name" value="RAS"/>
    <property type="match status" value="1"/>
</dbReference>
<dbReference type="SMART" id="SM00174">
    <property type="entry name" value="RHO"/>
    <property type="match status" value="1"/>
</dbReference>
<dbReference type="SUPFAM" id="SSF52540">
    <property type="entry name" value="P-loop containing nucleoside triphosphate hydrolases"/>
    <property type="match status" value="1"/>
</dbReference>
<dbReference type="PROSITE" id="PS51419">
    <property type="entry name" value="RAB"/>
    <property type="match status" value="1"/>
</dbReference>
<reference key="1">
    <citation type="journal article" date="2004" name="Proc. Natl. Acad. Sci. U.S.A.">
        <title>The diploid genome sequence of Candida albicans.</title>
        <authorList>
            <person name="Jones T."/>
            <person name="Federspiel N.A."/>
            <person name="Chibana H."/>
            <person name="Dungan J."/>
            <person name="Kalman S."/>
            <person name="Magee B.B."/>
            <person name="Newport G."/>
            <person name="Thorstenson Y.R."/>
            <person name="Agabian N."/>
            <person name="Magee P.T."/>
            <person name="Davis R.W."/>
            <person name="Scherer S."/>
        </authorList>
    </citation>
    <scope>NUCLEOTIDE SEQUENCE [LARGE SCALE GENOMIC DNA]</scope>
    <source>
        <strain>SC5314 / ATCC MYA-2876</strain>
    </source>
</reference>
<reference key="2">
    <citation type="journal article" date="2007" name="Genome Biol.">
        <title>Assembly of the Candida albicans genome into sixteen supercontigs aligned on the eight chromosomes.</title>
        <authorList>
            <person name="van het Hoog M."/>
            <person name="Rast T.J."/>
            <person name="Martchenko M."/>
            <person name="Grindle S."/>
            <person name="Dignard D."/>
            <person name="Hogues H."/>
            <person name="Cuomo C."/>
            <person name="Berriman M."/>
            <person name="Scherer S."/>
            <person name="Magee B.B."/>
            <person name="Whiteway M."/>
            <person name="Chibana H."/>
            <person name="Nantel A."/>
            <person name="Magee P.T."/>
        </authorList>
    </citation>
    <scope>GENOME REANNOTATION</scope>
    <source>
        <strain>SC5314 / ATCC MYA-2876</strain>
    </source>
</reference>
<reference key="3">
    <citation type="journal article" date="2013" name="Genome Biol.">
        <title>Assembly of a phased diploid Candida albicans genome facilitates allele-specific measurements and provides a simple model for repeat and indel structure.</title>
        <authorList>
            <person name="Muzzey D."/>
            <person name="Schwartz K."/>
            <person name="Weissman J.S."/>
            <person name="Sherlock G."/>
        </authorList>
    </citation>
    <scope>NUCLEOTIDE SEQUENCE [LARGE SCALE GENOMIC DNA]</scope>
    <scope>GENOME REANNOTATION</scope>
    <source>
        <strain>SC5314 / ATCC MYA-2876</strain>
    </source>
</reference>
<protein>
    <recommendedName>
        <fullName>Ras-related protein SEC4</fullName>
    </recommendedName>
</protein>
<keyword id="KW-0002">3D-structure</keyword>
<keyword id="KW-1003">Cell membrane</keyword>
<keyword id="KW-0968">Cytoplasmic vesicle</keyword>
<keyword id="KW-0268">Exocytosis</keyword>
<keyword id="KW-0342">GTP-binding</keyword>
<keyword id="KW-0449">Lipoprotein</keyword>
<keyword id="KW-0472">Membrane</keyword>
<keyword id="KW-0547">Nucleotide-binding</keyword>
<keyword id="KW-0636">Prenylation</keyword>
<keyword id="KW-0653">Protein transport</keyword>
<keyword id="KW-1185">Reference proteome</keyword>
<keyword id="KW-0813">Transport</keyword>
<comment type="function">
    <text evidence="1">Involved in exocytosis. Maybe by regulating the binding and fusion of secretory vesicles with the cell surface. The GTP-bound form of SEC4 may interact with an effector, thereby stimulating its activity and leading to exocytotic fusion. SEC4 may be an upstream activator of the 19.5S SEC8/SEC15 particle. SEC4 probably interacts directly with SEC8; it could serve as the attachment site for the SEC8/SEC15 particle (By similarity).</text>
</comment>
<comment type="subcellular location">
    <subcellularLocation>
        <location evidence="1">Cytoplasmic vesicle</location>
        <location evidence="1">Secretory vesicle membrane</location>
        <topology evidence="1">Lipid-anchor</topology>
        <orientation evidence="1">Cytoplasmic side</orientation>
    </subcellularLocation>
    <subcellularLocation>
        <location evidence="1">Cell membrane</location>
        <topology evidence="1">Lipid-anchor</topology>
        <orientation evidence="1">Cytoplasmic side</orientation>
    </subcellularLocation>
</comment>
<comment type="similarity">
    <text evidence="2">Belongs to the small GTPase superfamily. Rab family.</text>
</comment>
<organism>
    <name type="scientific">Candida albicans (strain SC5314 / ATCC MYA-2876)</name>
    <name type="common">Yeast</name>
    <dbReference type="NCBI Taxonomy" id="237561"/>
    <lineage>
        <taxon>Eukaryota</taxon>
        <taxon>Fungi</taxon>
        <taxon>Dikarya</taxon>
        <taxon>Ascomycota</taxon>
        <taxon>Saccharomycotina</taxon>
        <taxon>Pichiomycetes</taxon>
        <taxon>Debaryomycetaceae</taxon>
        <taxon>Candida/Lodderomyces clade</taxon>
        <taxon>Candida</taxon>
    </lineage>
</organism>
<gene>
    <name type="primary">SEC4</name>
    <name type="ordered locus">CAALFM_CR01750CA</name>
    <name type="ORF">Ca49C4.03c</name>
    <name type="ORF">CaO19.10103</name>
    <name type="ORF">CaO19.2571</name>
</gene>
<sequence>MSGKGTSSRAYDMIMKLLLVGDSGVGKSCLLLRFVEDKFNPSFITTIGIDFKIRTIESKGKRIKLQVWDTAGQERFRTITTAYYRGAMGIVLIYDVTDSRSFENVENWFQTVTQHANEDAQIFLVGNKCDDEVNRQVSKEQGQELAAKLNVPFLEASAKSNENVDSIFYELASIIQEKHVEENIGGVGGASGAGGIDVSQNNSGAKNNCC</sequence>